<feature type="chain" id="PRO_0000401942" description="tRNA (cytidine(34)-2'-O)-methyltransferase">
    <location>
        <begin position="1"/>
        <end position="160"/>
    </location>
</feature>
<feature type="binding site" evidence="1">
    <location>
        <position position="78"/>
    </location>
    <ligand>
        <name>S-adenosyl-L-methionine</name>
        <dbReference type="ChEBI" id="CHEBI:59789"/>
    </ligand>
</feature>
<feature type="binding site" evidence="1">
    <location>
        <position position="100"/>
    </location>
    <ligand>
        <name>S-adenosyl-L-methionine</name>
        <dbReference type="ChEBI" id="CHEBI:59789"/>
    </ligand>
</feature>
<feature type="binding site" evidence="1">
    <location>
        <position position="120"/>
    </location>
    <ligand>
        <name>S-adenosyl-L-methionine</name>
        <dbReference type="ChEBI" id="CHEBI:59789"/>
    </ligand>
</feature>
<feature type="binding site" evidence="1">
    <location>
        <position position="128"/>
    </location>
    <ligand>
        <name>S-adenosyl-L-methionine</name>
        <dbReference type="ChEBI" id="CHEBI:59789"/>
    </ligand>
</feature>
<organism>
    <name type="scientific">Beijerinckia indica subsp. indica (strain ATCC 9039 / DSM 1715 / NCIMB 8712)</name>
    <dbReference type="NCBI Taxonomy" id="395963"/>
    <lineage>
        <taxon>Bacteria</taxon>
        <taxon>Pseudomonadati</taxon>
        <taxon>Pseudomonadota</taxon>
        <taxon>Alphaproteobacteria</taxon>
        <taxon>Hyphomicrobiales</taxon>
        <taxon>Beijerinckiaceae</taxon>
        <taxon>Beijerinckia</taxon>
    </lineage>
</organism>
<sequence>MLALYQPDIPQNCGTMLRLCACLGVEAAIIEPAGFPVSDRHFRRAGMDYLDQVALSRHVSFTAFRAWQIETGRRLVLLSTKASQPYTDFTFRPDDILLMGRESAGVPEAVHASADARVVIPLRPPMRSLNVAVAAAMVLGEALRQVGALAKVMDAPRASL</sequence>
<dbReference type="EC" id="2.1.1.207" evidence="1"/>
<dbReference type="EMBL" id="CP001016">
    <property type="protein sequence ID" value="ACB93811.1"/>
    <property type="status" value="ALT_INIT"/>
    <property type="molecule type" value="Genomic_DNA"/>
</dbReference>
<dbReference type="RefSeq" id="WP_012383169.1">
    <property type="nucleotide sequence ID" value="NC_010581.1"/>
</dbReference>
<dbReference type="SMR" id="B2IBT9"/>
<dbReference type="STRING" id="395963.Bind_0153"/>
<dbReference type="KEGG" id="bid:Bind_0153"/>
<dbReference type="eggNOG" id="COG0219">
    <property type="taxonomic scope" value="Bacteria"/>
</dbReference>
<dbReference type="HOGENOM" id="CLU_110125_2_0_5"/>
<dbReference type="OrthoDB" id="9789043at2"/>
<dbReference type="Proteomes" id="UP000001695">
    <property type="component" value="Chromosome"/>
</dbReference>
<dbReference type="GO" id="GO:0005737">
    <property type="term" value="C:cytoplasm"/>
    <property type="evidence" value="ECO:0007669"/>
    <property type="project" value="UniProtKB-SubCell"/>
</dbReference>
<dbReference type="GO" id="GO:0003723">
    <property type="term" value="F:RNA binding"/>
    <property type="evidence" value="ECO:0007669"/>
    <property type="project" value="InterPro"/>
</dbReference>
<dbReference type="GO" id="GO:0141102">
    <property type="term" value="F:tRNA (5-carboxymethylaminomethyluridine(34)-2'-O)-methyltransferase activity"/>
    <property type="evidence" value="ECO:0007669"/>
    <property type="project" value="RHEA"/>
</dbReference>
<dbReference type="GO" id="GO:0141098">
    <property type="term" value="F:tRNA (cytidine(34)-2'-O)-methyltransferase activity"/>
    <property type="evidence" value="ECO:0007669"/>
    <property type="project" value="RHEA"/>
</dbReference>
<dbReference type="GO" id="GO:0002130">
    <property type="term" value="P:wobble position ribose methylation"/>
    <property type="evidence" value="ECO:0007669"/>
    <property type="project" value="TreeGrafter"/>
</dbReference>
<dbReference type="CDD" id="cd18094">
    <property type="entry name" value="SpoU-like_TrmL"/>
    <property type="match status" value="1"/>
</dbReference>
<dbReference type="Gene3D" id="3.40.1280.10">
    <property type="match status" value="1"/>
</dbReference>
<dbReference type="HAMAP" id="MF_01885">
    <property type="entry name" value="tRNA_methyltr_TrmL"/>
    <property type="match status" value="1"/>
</dbReference>
<dbReference type="InterPro" id="IPR029028">
    <property type="entry name" value="Alpha/beta_knot_MTases"/>
</dbReference>
<dbReference type="InterPro" id="IPR001537">
    <property type="entry name" value="SpoU_MeTrfase"/>
</dbReference>
<dbReference type="InterPro" id="IPR016914">
    <property type="entry name" value="TrmL"/>
</dbReference>
<dbReference type="InterPro" id="IPR029026">
    <property type="entry name" value="tRNA_m1G_MTases_N"/>
</dbReference>
<dbReference type="PANTHER" id="PTHR42971">
    <property type="entry name" value="TRNA (CYTIDINE(34)-2'-O)-METHYLTRANSFERASE"/>
    <property type="match status" value="1"/>
</dbReference>
<dbReference type="PANTHER" id="PTHR42971:SF1">
    <property type="entry name" value="TRNA (CYTIDINE(34)-2'-O)-METHYLTRANSFERASE"/>
    <property type="match status" value="1"/>
</dbReference>
<dbReference type="Pfam" id="PF00588">
    <property type="entry name" value="SpoU_methylase"/>
    <property type="match status" value="1"/>
</dbReference>
<dbReference type="PIRSF" id="PIRSF029256">
    <property type="entry name" value="SpoU_TrmH_prd"/>
    <property type="match status" value="1"/>
</dbReference>
<dbReference type="SUPFAM" id="SSF75217">
    <property type="entry name" value="alpha/beta knot"/>
    <property type="match status" value="1"/>
</dbReference>
<keyword id="KW-0963">Cytoplasm</keyword>
<keyword id="KW-0489">Methyltransferase</keyword>
<keyword id="KW-1185">Reference proteome</keyword>
<keyword id="KW-0949">S-adenosyl-L-methionine</keyword>
<keyword id="KW-0808">Transferase</keyword>
<keyword id="KW-0819">tRNA processing</keyword>
<proteinExistence type="inferred from homology"/>
<evidence type="ECO:0000255" key="1">
    <source>
        <dbReference type="HAMAP-Rule" id="MF_01885"/>
    </source>
</evidence>
<evidence type="ECO:0000305" key="2"/>
<comment type="function">
    <text evidence="1">Methylates the ribose at the nucleotide 34 wobble position in the two leucyl isoacceptors tRNA(Leu)(CmAA) and tRNA(Leu)(cmnm5UmAA). Catalyzes the methyl transfer from S-adenosyl-L-methionine to the 2'-OH of the wobble nucleotide.</text>
</comment>
<comment type="catalytic activity">
    <reaction evidence="1">
        <text>cytidine(34) in tRNA + S-adenosyl-L-methionine = 2'-O-methylcytidine(34) in tRNA + S-adenosyl-L-homocysteine + H(+)</text>
        <dbReference type="Rhea" id="RHEA:43084"/>
        <dbReference type="Rhea" id="RHEA-COMP:10331"/>
        <dbReference type="Rhea" id="RHEA-COMP:10332"/>
        <dbReference type="ChEBI" id="CHEBI:15378"/>
        <dbReference type="ChEBI" id="CHEBI:57856"/>
        <dbReference type="ChEBI" id="CHEBI:59789"/>
        <dbReference type="ChEBI" id="CHEBI:74495"/>
        <dbReference type="ChEBI" id="CHEBI:82748"/>
        <dbReference type="EC" id="2.1.1.207"/>
    </reaction>
</comment>
<comment type="catalytic activity">
    <reaction evidence="1">
        <text>5-carboxymethylaminomethyluridine(34) in tRNA(Leu) + S-adenosyl-L-methionine = 5-carboxymethylaminomethyl-2'-O-methyluridine(34) in tRNA(Leu) + S-adenosyl-L-homocysteine + H(+)</text>
        <dbReference type="Rhea" id="RHEA:43088"/>
        <dbReference type="Rhea" id="RHEA-COMP:10333"/>
        <dbReference type="Rhea" id="RHEA-COMP:10334"/>
        <dbReference type="ChEBI" id="CHEBI:15378"/>
        <dbReference type="ChEBI" id="CHEBI:57856"/>
        <dbReference type="ChEBI" id="CHEBI:59789"/>
        <dbReference type="ChEBI" id="CHEBI:74508"/>
        <dbReference type="ChEBI" id="CHEBI:74511"/>
        <dbReference type="EC" id="2.1.1.207"/>
    </reaction>
</comment>
<comment type="subunit">
    <text evidence="1">Homodimer.</text>
</comment>
<comment type="subcellular location">
    <subcellularLocation>
        <location evidence="1">Cytoplasm</location>
    </subcellularLocation>
</comment>
<comment type="similarity">
    <text evidence="1">Belongs to the class IV-like SAM-binding methyltransferase superfamily. RNA methyltransferase TrmH family. TrmL subfamily.</text>
</comment>
<comment type="sequence caution" evidence="2">
    <conflict type="erroneous initiation">
        <sequence resource="EMBL-CDS" id="ACB93811"/>
    </conflict>
    <text>Extended N-terminus.</text>
</comment>
<protein>
    <recommendedName>
        <fullName evidence="1">tRNA (cytidine(34)-2'-O)-methyltransferase</fullName>
        <ecNumber evidence="1">2.1.1.207</ecNumber>
    </recommendedName>
    <alternativeName>
        <fullName evidence="1">tRNA (cytidine/uridine-2'-O-)-methyltransferase TrmL</fullName>
    </alternativeName>
</protein>
<name>TRML_BEII9</name>
<accession>B2IBT9</accession>
<gene>
    <name evidence="1" type="primary">trmL</name>
    <name type="ordered locus">Bind_0153</name>
</gene>
<reference key="1">
    <citation type="journal article" date="2010" name="J. Bacteriol.">
        <title>Complete genome sequence of Beijerinckia indica subsp. indica.</title>
        <authorList>
            <person name="Tamas I."/>
            <person name="Dedysh S.N."/>
            <person name="Liesack W."/>
            <person name="Stott M.B."/>
            <person name="Alam M."/>
            <person name="Murrell J.C."/>
            <person name="Dunfield P.F."/>
        </authorList>
    </citation>
    <scope>NUCLEOTIDE SEQUENCE [LARGE SCALE GENOMIC DNA]</scope>
    <source>
        <strain>ATCC 9039 / DSM 1715 / NCIMB 8712</strain>
    </source>
</reference>